<evidence type="ECO:0000250" key="1">
    <source>
        <dbReference type="UniProtKB" id="P0ACB0"/>
    </source>
</evidence>
<evidence type="ECO:0000255" key="2">
    <source>
        <dbReference type="PROSITE-ProRule" id="PRU00596"/>
    </source>
</evidence>
<evidence type="ECO:0000269" key="3">
    <source>
    </source>
</evidence>
<evidence type="ECO:0000305" key="4"/>
<organism>
    <name type="scientific">Mycoplasma genitalium (strain ATCC 33530 / DSM 19775 / NCTC 10195 / G37)</name>
    <name type="common">Mycoplasmoides genitalium</name>
    <dbReference type="NCBI Taxonomy" id="243273"/>
    <lineage>
        <taxon>Bacteria</taxon>
        <taxon>Bacillati</taxon>
        <taxon>Mycoplasmatota</taxon>
        <taxon>Mycoplasmoidales</taxon>
        <taxon>Mycoplasmoidaceae</taxon>
        <taxon>Mycoplasmoides</taxon>
    </lineage>
</organism>
<protein>
    <recommendedName>
        <fullName>Replicative DNA helicase DnaB</fullName>
        <ecNumber evidence="1">5.6.2.3</ecNumber>
    </recommendedName>
    <alternativeName>
        <fullName evidence="4">DNA 5'-3' helicase DnaB</fullName>
    </alternativeName>
</protein>
<feature type="chain" id="PRO_0000102025" description="Replicative DNA helicase DnaB">
    <location>
        <begin position="1"/>
        <end position="468"/>
    </location>
</feature>
<feature type="domain" description="SF4 helicase" evidence="2">
    <location>
        <begin position="189"/>
        <end position="462"/>
    </location>
</feature>
<feature type="binding site" evidence="2">
    <location>
        <begin position="220"/>
        <end position="227"/>
    </location>
    <ligand>
        <name>ATP</name>
        <dbReference type="ChEBI" id="CHEBI:30616"/>
    </ligand>
</feature>
<feature type="sequence conflict" description="In Ref. 2; AAD12329." evidence="4" ref="2">
    <original>HESQ</original>
    <variation>CMKS</variation>
    <location>
        <begin position="267"/>
        <end position="270"/>
    </location>
</feature>
<proteinExistence type="inferred from homology"/>
<reference key="1">
    <citation type="journal article" date="1995" name="Science">
        <title>The minimal gene complement of Mycoplasma genitalium.</title>
        <authorList>
            <person name="Fraser C.M."/>
            <person name="Gocayne J.D."/>
            <person name="White O."/>
            <person name="Adams M.D."/>
            <person name="Clayton R.A."/>
            <person name="Fleischmann R.D."/>
            <person name="Bult C.J."/>
            <person name="Kerlavage A.R."/>
            <person name="Sutton G.G."/>
            <person name="Kelley J.M."/>
            <person name="Fritchman J.L."/>
            <person name="Weidman J.F."/>
            <person name="Small K.V."/>
            <person name="Sandusky M."/>
            <person name="Fuhrmann J.L."/>
            <person name="Nguyen D.T."/>
            <person name="Utterback T.R."/>
            <person name="Saudek D.M."/>
            <person name="Phillips C.A."/>
            <person name="Merrick J.M."/>
            <person name="Tomb J.-F."/>
            <person name="Dougherty B.A."/>
            <person name="Bott K.F."/>
            <person name="Hu P.-C."/>
            <person name="Lucier T.S."/>
            <person name="Peterson S.N."/>
            <person name="Smith H.O."/>
            <person name="Hutchison C.A. III"/>
            <person name="Venter J.C."/>
        </authorList>
    </citation>
    <scope>NUCLEOTIDE SEQUENCE [LARGE SCALE GENOMIC DNA]</scope>
    <source>
        <strain>ATCC 33530 / DSM 19775 / NCTC 10195 / G37</strain>
    </source>
</reference>
<reference key="2">
    <citation type="journal article" date="1993" name="J. Bacteriol.">
        <title>A survey of the Mycoplasma genitalium genome by using random sequencing.</title>
        <authorList>
            <person name="Peterson S.N."/>
            <person name="Hu P.-C."/>
            <person name="Bott K.F."/>
            <person name="Hutchison C.A. III"/>
        </authorList>
    </citation>
    <scope>NUCLEOTIDE SEQUENCE [GENOMIC DNA] OF 1-98 AND 267-378</scope>
    <source>
        <strain>ATCC 33530 / DSM 19775 / NCTC 10195 / G37</strain>
    </source>
</reference>
<reference key="3">
    <citation type="journal article" date="2006" name="Proc. Natl. Acad. Sci. U.S.A.">
        <title>Essential genes of a minimal bacterium.</title>
        <authorList>
            <person name="Glass J.I."/>
            <person name="Assad-Garcia N."/>
            <person name="Alperovich N."/>
            <person name="Yooseph S."/>
            <person name="Lewis M.R."/>
            <person name="Maruf M."/>
            <person name="Hutchison C.A. III"/>
            <person name="Smith H.O."/>
            <person name="Venter J.C."/>
        </authorList>
    </citation>
    <scope>SEQUENCE REVISION</scope>
    <scope>DISRUPTION PHENOTYPE</scope>
    <source>
        <strain>ATCC 33530 / DSM 19775 / NCTC 10195 / G37</strain>
    </source>
</reference>
<name>DNAB_MYCGE</name>
<keyword id="KW-0067">ATP-binding</keyword>
<keyword id="KW-0235">DNA replication</keyword>
<keyword id="KW-0238">DNA-binding</keyword>
<keyword id="KW-0347">Helicase</keyword>
<keyword id="KW-0378">Hydrolase</keyword>
<keyword id="KW-0413">Isomerase</keyword>
<keyword id="KW-0547">Nucleotide-binding</keyword>
<keyword id="KW-0639">Primosome</keyword>
<keyword id="KW-1185">Reference proteome</keyword>
<accession>P47340</accession>
<accession>Q49285</accession>
<accession>Q49456</accession>
<dbReference type="EC" id="5.6.2.3" evidence="1"/>
<dbReference type="EMBL" id="L43967">
    <property type="protein sequence ID" value="AAC71312.2"/>
    <property type="molecule type" value="Genomic_DNA"/>
</dbReference>
<dbReference type="EMBL" id="U02158">
    <property type="protein sequence ID" value="AAD12440.1"/>
    <property type="status" value="ALT_INIT"/>
    <property type="molecule type" value="Genomic_DNA"/>
</dbReference>
<dbReference type="EMBL" id="U01803">
    <property type="protein sequence ID" value="AAD12329.1"/>
    <property type="molecule type" value="Genomic_DNA"/>
</dbReference>
<dbReference type="RefSeq" id="WP_010869329.1">
    <property type="nucleotide sequence ID" value="NC_000908.2"/>
</dbReference>
<dbReference type="SMR" id="P47340"/>
<dbReference type="FunCoup" id="P47340">
    <property type="interactions" value="112"/>
</dbReference>
<dbReference type="STRING" id="243273.MG_094"/>
<dbReference type="GeneID" id="88282217"/>
<dbReference type="KEGG" id="mge:MG_094"/>
<dbReference type="eggNOG" id="COG0305">
    <property type="taxonomic scope" value="Bacteria"/>
</dbReference>
<dbReference type="HOGENOM" id="CLU_005373_0_0_14"/>
<dbReference type="InParanoid" id="P47340"/>
<dbReference type="OrthoDB" id="9773982at2"/>
<dbReference type="BioCyc" id="MGEN243273:G1GJ2-106-MONOMER"/>
<dbReference type="Proteomes" id="UP000000807">
    <property type="component" value="Chromosome"/>
</dbReference>
<dbReference type="GO" id="GO:0005829">
    <property type="term" value="C:cytosol"/>
    <property type="evidence" value="ECO:0000318"/>
    <property type="project" value="GO_Central"/>
</dbReference>
<dbReference type="GO" id="GO:1990077">
    <property type="term" value="C:primosome complex"/>
    <property type="evidence" value="ECO:0007669"/>
    <property type="project" value="UniProtKB-KW"/>
</dbReference>
<dbReference type="GO" id="GO:0005524">
    <property type="term" value="F:ATP binding"/>
    <property type="evidence" value="ECO:0007669"/>
    <property type="project" value="UniProtKB-KW"/>
</dbReference>
<dbReference type="GO" id="GO:0016887">
    <property type="term" value="F:ATP hydrolysis activity"/>
    <property type="evidence" value="ECO:0007669"/>
    <property type="project" value="InterPro"/>
</dbReference>
<dbReference type="GO" id="GO:0003677">
    <property type="term" value="F:DNA binding"/>
    <property type="evidence" value="ECO:0007669"/>
    <property type="project" value="UniProtKB-KW"/>
</dbReference>
<dbReference type="GO" id="GO:0003678">
    <property type="term" value="F:DNA helicase activity"/>
    <property type="evidence" value="ECO:0000318"/>
    <property type="project" value="GO_Central"/>
</dbReference>
<dbReference type="GO" id="GO:0006260">
    <property type="term" value="P:DNA replication"/>
    <property type="evidence" value="ECO:0000318"/>
    <property type="project" value="GO_Central"/>
</dbReference>
<dbReference type="GO" id="GO:0006269">
    <property type="term" value="P:DNA replication, synthesis of primer"/>
    <property type="evidence" value="ECO:0007669"/>
    <property type="project" value="UniProtKB-KW"/>
</dbReference>
<dbReference type="CDD" id="cd00984">
    <property type="entry name" value="DnaB_C"/>
    <property type="match status" value="1"/>
</dbReference>
<dbReference type="Gene3D" id="1.10.860.10">
    <property type="entry name" value="DNAb Helicase, Chain A"/>
    <property type="match status" value="1"/>
</dbReference>
<dbReference type="Gene3D" id="3.40.50.300">
    <property type="entry name" value="P-loop containing nucleotide triphosphate hydrolases"/>
    <property type="match status" value="1"/>
</dbReference>
<dbReference type="InterPro" id="IPR003593">
    <property type="entry name" value="AAA+_ATPase"/>
</dbReference>
<dbReference type="InterPro" id="IPR007694">
    <property type="entry name" value="DNA_helicase_DnaB-like_C"/>
</dbReference>
<dbReference type="InterPro" id="IPR016136">
    <property type="entry name" value="DNA_helicase_N/primase_C"/>
</dbReference>
<dbReference type="InterPro" id="IPR027417">
    <property type="entry name" value="P-loop_NTPase"/>
</dbReference>
<dbReference type="PANTHER" id="PTHR30153:SF2">
    <property type="entry name" value="REPLICATIVE DNA HELICASE"/>
    <property type="match status" value="1"/>
</dbReference>
<dbReference type="PANTHER" id="PTHR30153">
    <property type="entry name" value="REPLICATIVE DNA HELICASE DNAB"/>
    <property type="match status" value="1"/>
</dbReference>
<dbReference type="Pfam" id="PF03796">
    <property type="entry name" value="DnaB_C"/>
    <property type="match status" value="1"/>
</dbReference>
<dbReference type="SMART" id="SM00382">
    <property type="entry name" value="AAA"/>
    <property type="match status" value="1"/>
</dbReference>
<dbReference type="SUPFAM" id="SSF52540">
    <property type="entry name" value="P-loop containing nucleoside triphosphate hydrolases"/>
    <property type="match status" value="1"/>
</dbReference>
<dbReference type="PROSITE" id="PS51199">
    <property type="entry name" value="SF4_HELICASE"/>
    <property type="match status" value="1"/>
</dbReference>
<sequence length="468" mass="53884">MGQQTSFKYANDSNIERAERRLMQAVAQNSEGIDLIFNKLEPIDFFATPFKLIFQTAKENYQLNNPIIGSGLLEAVKFKLDANDQSTKSELEILFTKILLIRLPPNQTEIKTLVDVVKKASIFRRLQQFAKRVYNEEFKLKEDRFEGYLQAIQDDFVKIIHSAFSNIFAFSYDEIANQEEALIKKVHRGELIISGLSSGFLKLDQLTSGWKPGELIVIAARPGRGKTALLINFMASAAKQIDPKTDVVLFFSLEMRNREIYQRHLMHESQTSYTLTNRQRINNVFEELMEASSRIKNLPIKLFDYSSLTLQEIRNQITEVSKTSNVRLVIIDYLQLVNALKNNYGLTRQQEVTMISQSLKAFAKEFNTPIIAAAQLSRRIEERKDSRPILSDLRESGSIEQDADMVLFIHRTNDDKKEQEEENTNLFEVELILEKNRNGPNGKVKLNFRSDTSSFISQYSPSFDDQYS</sequence>
<gene>
    <name type="primary">dnaB</name>
    <name type="ordered locus">MG094</name>
</gene>
<comment type="function">
    <text evidence="1">The main replicative DNA helicase, it participates in initiation and elongation during chromosome replication. Travels ahead of the DNA replisome, separating dsDNA into templates for DNA synthesis. A processive ATP-dependent 5'-3' DNA helicase it has DNA-dependent ATPase activity.</text>
</comment>
<comment type="catalytic activity">
    <reaction evidence="1">
        <text>Couples ATP hydrolysis with the unwinding of duplex DNA at the replication fork by translocating in the 5'-3' direction. This creates two antiparallel DNA single strands (ssDNA). The leading ssDNA polymer is the template for DNA polymerase III holoenzyme which synthesizes a continuous strand.</text>
        <dbReference type="EC" id="5.6.2.3"/>
    </reaction>
</comment>
<comment type="catalytic activity">
    <reaction evidence="1">
        <text>ATP + H2O = ADP + phosphate + H(+)</text>
        <dbReference type="Rhea" id="RHEA:13065"/>
        <dbReference type="ChEBI" id="CHEBI:15377"/>
        <dbReference type="ChEBI" id="CHEBI:15378"/>
        <dbReference type="ChEBI" id="CHEBI:30616"/>
        <dbReference type="ChEBI" id="CHEBI:43474"/>
        <dbReference type="ChEBI" id="CHEBI:456216"/>
        <dbReference type="EC" id="5.6.2.3"/>
    </reaction>
</comment>
<comment type="subunit">
    <text evidence="1">Homohexamer.</text>
</comment>
<comment type="disruption phenotype">
    <text evidence="3">Probably essential, it was not disrupted in a global transposon mutagenesis study.</text>
</comment>
<comment type="similarity">
    <text evidence="4">Belongs to the helicase family. DnaB subfamily.</text>
</comment>
<comment type="sequence caution" evidence="4">
    <conflict type="erroneous initiation">
        <sequence resource="EMBL-CDS" id="AAD12440"/>
    </conflict>
    <text>Extended N-terminus.</text>
</comment>